<keyword id="KW-0030">Aminoacyl-tRNA synthetase</keyword>
<keyword id="KW-0067">ATP-binding</keyword>
<keyword id="KW-0963">Cytoplasm</keyword>
<keyword id="KW-0436">Ligase</keyword>
<keyword id="KW-0460">Magnesium</keyword>
<keyword id="KW-0479">Metal-binding</keyword>
<keyword id="KW-0547">Nucleotide-binding</keyword>
<keyword id="KW-0648">Protein biosynthesis</keyword>
<sequence>MEIEAVEKEAIEKLSKISNVQELESFRIEFLGKKGKITGLMKNLKNLPPEERPAYGKRVNELREKIEKLFEEKRQQIQRILEQEKMEKMRIDVTVPGARRKLGHSHPVLKVMEEIERIFVSMGFDVVEGPEIETTWHNFDALNTPEWHPARDEHDSFYITDDLLLRTHTSPVQIRTMLERKPPIAIISPGKVYRRDYDATHLPMFHQVEGLHVDRDLSVAHLKFTLEEFARRMFGEGAKVRLRPSFFPFTEPSFEVDVYLSGYGWLEILGAGMVDPNVFLNVGYDPEEWTGYAFGMGVERIAMLKYGITDIREFVRNDVRFLSSY</sequence>
<organism>
    <name type="scientific">Thermotoga petrophila (strain ATCC BAA-488 / DSM 13995 / JCM 10881 / RKU-1)</name>
    <dbReference type="NCBI Taxonomy" id="390874"/>
    <lineage>
        <taxon>Bacteria</taxon>
        <taxon>Thermotogati</taxon>
        <taxon>Thermotogota</taxon>
        <taxon>Thermotogae</taxon>
        <taxon>Thermotogales</taxon>
        <taxon>Thermotogaceae</taxon>
        <taxon>Thermotoga</taxon>
    </lineage>
</organism>
<proteinExistence type="inferred from homology"/>
<reference key="1">
    <citation type="submission" date="2007-05" db="EMBL/GenBank/DDBJ databases">
        <title>Complete sequence of Thermotoga petrophila RKU-1.</title>
        <authorList>
            <consortium name="US DOE Joint Genome Institute"/>
            <person name="Copeland A."/>
            <person name="Lucas S."/>
            <person name="Lapidus A."/>
            <person name="Barry K."/>
            <person name="Glavina del Rio T."/>
            <person name="Dalin E."/>
            <person name="Tice H."/>
            <person name="Pitluck S."/>
            <person name="Sims D."/>
            <person name="Brettin T."/>
            <person name="Bruce D."/>
            <person name="Detter J.C."/>
            <person name="Han C."/>
            <person name="Tapia R."/>
            <person name="Schmutz J."/>
            <person name="Larimer F."/>
            <person name="Land M."/>
            <person name="Hauser L."/>
            <person name="Kyrpides N."/>
            <person name="Mikhailova N."/>
            <person name="Nelson K."/>
            <person name="Gogarten J.P."/>
            <person name="Noll K."/>
            <person name="Richardson P."/>
        </authorList>
    </citation>
    <scope>NUCLEOTIDE SEQUENCE [LARGE SCALE GENOMIC DNA]</scope>
    <source>
        <strain>ATCC BAA-488 / DSM 13995 / JCM 10881 / RKU-1</strain>
    </source>
</reference>
<feature type="chain" id="PRO_1000059247" description="Phenylalanine--tRNA ligase alpha subunit">
    <location>
        <begin position="1"/>
        <end position="325"/>
    </location>
</feature>
<feature type="binding site" evidence="1">
    <location>
        <position position="251"/>
    </location>
    <ligand>
        <name>Mg(2+)</name>
        <dbReference type="ChEBI" id="CHEBI:18420"/>
        <note>shared with beta subunit</note>
    </ligand>
</feature>
<protein>
    <recommendedName>
        <fullName evidence="1">Phenylalanine--tRNA ligase alpha subunit</fullName>
        <ecNumber evidence="1">6.1.1.20</ecNumber>
    </recommendedName>
    <alternativeName>
        <fullName evidence="1">Phenylalanyl-tRNA synthetase alpha subunit</fullName>
        <shortName evidence="1">PheRS</shortName>
    </alternativeName>
</protein>
<dbReference type="EC" id="6.1.1.20" evidence="1"/>
<dbReference type="EMBL" id="CP000702">
    <property type="protein sequence ID" value="ABQ46135.1"/>
    <property type="molecule type" value="Genomic_DNA"/>
</dbReference>
<dbReference type="RefSeq" id="WP_011942809.1">
    <property type="nucleotide sequence ID" value="NC_009486.1"/>
</dbReference>
<dbReference type="SMR" id="A5IIW2"/>
<dbReference type="STRING" id="390874.Tpet_0106"/>
<dbReference type="KEGG" id="tpt:Tpet_0106"/>
<dbReference type="eggNOG" id="COG0016">
    <property type="taxonomic scope" value="Bacteria"/>
</dbReference>
<dbReference type="HOGENOM" id="CLU_025086_0_1_0"/>
<dbReference type="Proteomes" id="UP000006558">
    <property type="component" value="Chromosome"/>
</dbReference>
<dbReference type="GO" id="GO:0005737">
    <property type="term" value="C:cytoplasm"/>
    <property type="evidence" value="ECO:0007669"/>
    <property type="project" value="UniProtKB-SubCell"/>
</dbReference>
<dbReference type="GO" id="GO:0005524">
    <property type="term" value="F:ATP binding"/>
    <property type="evidence" value="ECO:0007669"/>
    <property type="project" value="UniProtKB-UniRule"/>
</dbReference>
<dbReference type="GO" id="GO:0000287">
    <property type="term" value="F:magnesium ion binding"/>
    <property type="evidence" value="ECO:0007669"/>
    <property type="project" value="UniProtKB-UniRule"/>
</dbReference>
<dbReference type="GO" id="GO:0004826">
    <property type="term" value="F:phenylalanine-tRNA ligase activity"/>
    <property type="evidence" value="ECO:0007669"/>
    <property type="project" value="UniProtKB-UniRule"/>
</dbReference>
<dbReference type="GO" id="GO:0000049">
    <property type="term" value="F:tRNA binding"/>
    <property type="evidence" value="ECO:0007669"/>
    <property type="project" value="InterPro"/>
</dbReference>
<dbReference type="GO" id="GO:0006432">
    <property type="term" value="P:phenylalanyl-tRNA aminoacylation"/>
    <property type="evidence" value="ECO:0007669"/>
    <property type="project" value="UniProtKB-UniRule"/>
</dbReference>
<dbReference type="CDD" id="cd00496">
    <property type="entry name" value="PheRS_alpha_core"/>
    <property type="match status" value="1"/>
</dbReference>
<dbReference type="FunFam" id="3.30.930.10:FF:000003">
    <property type="entry name" value="Phenylalanine--tRNA ligase alpha subunit"/>
    <property type="match status" value="1"/>
</dbReference>
<dbReference type="Gene3D" id="3.30.930.10">
    <property type="entry name" value="Bira Bifunctional Protein, Domain 2"/>
    <property type="match status" value="1"/>
</dbReference>
<dbReference type="HAMAP" id="MF_00281">
    <property type="entry name" value="Phe_tRNA_synth_alpha1"/>
    <property type="match status" value="1"/>
</dbReference>
<dbReference type="InterPro" id="IPR006195">
    <property type="entry name" value="aa-tRNA-synth_II"/>
</dbReference>
<dbReference type="InterPro" id="IPR045864">
    <property type="entry name" value="aa-tRNA-synth_II/BPL/LPL"/>
</dbReference>
<dbReference type="InterPro" id="IPR004529">
    <property type="entry name" value="Phe-tRNA-synth_IIc_asu"/>
</dbReference>
<dbReference type="InterPro" id="IPR004188">
    <property type="entry name" value="Phe-tRNA_ligase_II_N"/>
</dbReference>
<dbReference type="InterPro" id="IPR022911">
    <property type="entry name" value="Phe_tRNA_ligase_alpha1_bac"/>
</dbReference>
<dbReference type="InterPro" id="IPR002319">
    <property type="entry name" value="Phenylalanyl-tRNA_Synthase"/>
</dbReference>
<dbReference type="InterPro" id="IPR010978">
    <property type="entry name" value="tRNA-bd_arm"/>
</dbReference>
<dbReference type="NCBIfam" id="TIGR00468">
    <property type="entry name" value="pheS"/>
    <property type="match status" value="1"/>
</dbReference>
<dbReference type="PANTHER" id="PTHR11538:SF41">
    <property type="entry name" value="PHENYLALANINE--TRNA LIGASE, MITOCHONDRIAL"/>
    <property type="match status" value="1"/>
</dbReference>
<dbReference type="PANTHER" id="PTHR11538">
    <property type="entry name" value="PHENYLALANYL-TRNA SYNTHETASE"/>
    <property type="match status" value="1"/>
</dbReference>
<dbReference type="Pfam" id="PF02912">
    <property type="entry name" value="Phe_tRNA-synt_N"/>
    <property type="match status" value="1"/>
</dbReference>
<dbReference type="Pfam" id="PF01409">
    <property type="entry name" value="tRNA-synt_2d"/>
    <property type="match status" value="1"/>
</dbReference>
<dbReference type="SUPFAM" id="SSF55681">
    <property type="entry name" value="Class II aaRS and biotin synthetases"/>
    <property type="match status" value="1"/>
</dbReference>
<dbReference type="SUPFAM" id="SSF46589">
    <property type="entry name" value="tRNA-binding arm"/>
    <property type="match status" value="1"/>
</dbReference>
<dbReference type="PROSITE" id="PS50862">
    <property type="entry name" value="AA_TRNA_LIGASE_II"/>
    <property type="match status" value="1"/>
</dbReference>
<accession>A5IIW2</accession>
<gene>
    <name evidence="1" type="primary">pheS</name>
    <name type="ordered locus">Tpet_0106</name>
</gene>
<evidence type="ECO:0000255" key="1">
    <source>
        <dbReference type="HAMAP-Rule" id="MF_00281"/>
    </source>
</evidence>
<comment type="catalytic activity">
    <reaction evidence="1">
        <text>tRNA(Phe) + L-phenylalanine + ATP = L-phenylalanyl-tRNA(Phe) + AMP + diphosphate + H(+)</text>
        <dbReference type="Rhea" id="RHEA:19413"/>
        <dbReference type="Rhea" id="RHEA-COMP:9668"/>
        <dbReference type="Rhea" id="RHEA-COMP:9699"/>
        <dbReference type="ChEBI" id="CHEBI:15378"/>
        <dbReference type="ChEBI" id="CHEBI:30616"/>
        <dbReference type="ChEBI" id="CHEBI:33019"/>
        <dbReference type="ChEBI" id="CHEBI:58095"/>
        <dbReference type="ChEBI" id="CHEBI:78442"/>
        <dbReference type="ChEBI" id="CHEBI:78531"/>
        <dbReference type="ChEBI" id="CHEBI:456215"/>
        <dbReference type="EC" id="6.1.1.20"/>
    </reaction>
</comment>
<comment type="cofactor">
    <cofactor evidence="1">
        <name>Mg(2+)</name>
        <dbReference type="ChEBI" id="CHEBI:18420"/>
    </cofactor>
    <text evidence="1">Binds 2 magnesium ions per tetramer.</text>
</comment>
<comment type="subunit">
    <text evidence="1">Tetramer of two alpha and two beta subunits.</text>
</comment>
<comment type="subcellular location">
    <subcellularLocation>
        <location evidence="1">Cytoplasm</location>
    </subcellularLocation>
</comment>
<comment type="similarity">
    <text evidence="1">Belongs to the class-II aminoacyl-tRNA synthetase family. Phe-tRNA synthetase alpha subunit type 1 subfamily.</text>
</comment>
<name>SYFA_THEP1</name>